<feature type="chain" id="PRO_1000054349" description="CCA-adding enzyme">
    <location>
        <begin position="1"/>
        <end position="444"/>
    </location>
</feature>
<feature type="binding site" evidence="1">
    <location>
        <position position="57"/>
    </location>
    <ligand>
        <name>ATP</name>
        <dbReference type="ChEBI" id="CHEBI:30616"/>
    </ligand>
</feature>
<feature type="binding site" evidence="1">
    <location>
        <position position="57"/>
    </location>
    <ligand>
        <name>CTP</name>
        <dbReference type="ChEBI" id="CHEBI:37563"/>
    </ligand>
</feature>
<feature type="binding site" evidence="1">
    <location>
        <position position="60"/>
    </location>
    <ligand>
        <name>ATP</name>
        <dbReference type="ChEBI" id="CHEBI:30616"/>
    </ligand>
</feature>
<feature type="binding site" evidence="1">
    <location>
        <position position="60"/>
    </location>
    <ligand>
        <name>CTP</name>
        <dbReference type="ChEBI" id="CHEBI:37563"/>
    </ligand>
</feature>
<feature type="binding site" evidence="1">
    <location>
        <position position="69"/>
    </location>
    <ligand>
        <name>Mg(2+)</name>
        <dbReference type="ChEBI" id="CHEBI:18420"/>
    </ligand>
</feature>
<feature type="binding site" evidence="1">
    <location>
        <position position="71"/>
    </location>
    <ligand>
        <name>Mg(2+)</name>
        <dbReference type="ChEBI" id="CHEBI:18420"/>
    </ligand>
</feature>
<feature type="binding site" evidence="1">
    <location>
        <position position="124"/>
    </location>
    <ligand>
        <name>Mg(2+)</name>
        <dbReference type="ChEBI" id="CHEBI:18420"/>
    </ligand>
</feature>
<feature type="binding site" evidence="1">
    <location>
        <position position="147"/>
    </location>
    <ligand>
        <name>ATP</name>
        <dbReference type="ChEBI" id="CHEBI:30616"/>
    </ligand>
</feature>
<feature type="binding site" evidence="1">
    <location>
        <position position="147"/>
    </location>
    <ligand>
        <name>CTP</name>
        <dbReference type="ChEBI" id="CHEBI:37563"/>
    </ligand>
</feature>
<feature type="binding site" evidence="1">
    <location>
        <position position="168"/>
    </location>
    <ligand>
        <name>ATP</name>
        <dbReference type="ChEBI" id="CHEBI:30616"/>
    </ligand>
</feature>
<feature type="binding site" evidence="1">
    <location>
        <position position="168"/>
    </location>
    <ligand>
        <name>CTP</name>
        <dbReference type="ChEBI" id="CHEBI:37563"/>
    </ligand>
</feature>
<feature type="binding site" evidence="1">
    <location>
        <position position="177"/>
    </location>
    <ligand>
        <name>ATP</name>
        <dbReference type="ChEBI" id="CHEBI:30616"/>
    </ligand>
</feature>
<feature type="binding site" evidence="1">
    <location>
        <position position="177"/>
    </location>
    <ligand>
        <name>CTP</name>
        <dbReference type="ChEBI" id="CHEBI:37563"/>
    </ligand>
</feature>
<reference key="1">
    <citation type="submission" date="2007-03" db="EMBL/GenBank/DDBJ databases">
        <title>Complete sequence of chromosome of Methanococcus maripaludis C5.</title>
        <authorList>
            <consortium name="US DOE Joint Genome Institute"/>
            <person name="Copeland A."/>
            <person name="Lucas S."/>
            <person name="Lapidus A."/>
            <person name="Barry K."/>
            <person name="Glavina del Rio T."/>
            <person name="Dalin E."/>
            <person name="Tice H."/>
            <person name="Pitluck S."/>
            <person name="Chertkov O."/>
            <person name="Brettin T."/>
            <person name="Bruce D."/>
            <person name="Han C."/>
            <person name="Detter J.C."/>
            <person name="Schmutz J."/>
            <person name="Larimer F."/>
            <person name="Land M."/>
            <person name="Hauser L."/>
            <person name="Kyrpides N."/>
            <person name="Mikhailova N."/>
            <person name="Sieprawska-Lupa M."/>
            <person name="Whitman W.B."/>
            <person name="Richardson P."/>
        </authorList>
    </citation>
    <scope>NUCLEOTIDE SEQUENCE [LARGE SCALE GENOMIC DNA]</scope>
    <source>
        <strain>C5 / ATCC BAA-1333</strain>
    </source>
</reference>
<organism>
    <name type="scientific">Methanococcus maripaludis (strain C5 / ATCC BAA-1333)</name>
    <dbReference type="NCBI Taxonomy" id="402880"/>
    <lineage>
        <taxon>Archaea</taxon>
        <taxon>Methanobacteriati</taxon>
        <taxon>Methanobacteriota</taxon>
        <taxon>Methanomada group</taxon>
        <taxon>Methanococci</taxon>
        <taxon>Methanococcales</taxon>
        <taxon>Methanococcaceae</taxon>
        <taxon>Methanococcus</taxon>
    </lineage>
</organism>
<comment type="function">
    <text evidence="1">Catalyzes the addition and repair of the essential 3'-terminal CCA sequence in tRNAs without using a nucleic acid template. Adds these three nucleotides in the order of C, C, and A to the tRNA nucleotide-73, using CTP and ATP as substrates and producing inorganic pyrophosphate. tRNA 3'-terminal CCA addition is required both for tRNA processing and repair. Also involved in tRNA surveillance by mediating tandem CCA addition to generate a CCACCA at the 3' terminus of unstable tRNAs. While stable tRNAs receive only 3'-terminal CCA, unstable tRNAs are marked with CCACCA and rapidly degraded.</text>
</comment>
<comment type="catalytic activity">
    <reaction evidence="1">
        <text>a tRNA precursor + 2 CTP + ATP = a tRNA with a 3' CCA end + 3 diphosphate</text>
        <dbReference type="Rhea" id="RHEA:14433"/>
        <dbReference type="Rhea" id="RHEA-COMP:10465"/>
        <dbReference type="Rhea" id="RHEA-COMP:10468"/>
        <dbReference type="ChEBI" id="CHEBI:30616"/>
        <dbReference type="ChEBI" id="CHEBI:33019"/>
        <dbReference type="ChEBI" id="CHEBI:37563"/>
        <dbReference type="ChEBI" id="CHEBI:74896"/>
        <dbReference type="ChEBI" id="CHEBI:83071"/>
        <dbReference type="EC" id="2.7.7.72"/>
    </reaction>
</comment>
<comment type="catalytic activity">
    <reaction evidence="1">
        <text>a tRNA with a 3' CCA end + 2 CTP + ATP = a tRNA with a 3' CCACCA end + 3 diphosphate</text>
        <dbReference type="Rhea" id="RHEA:76235"/>
        <dbReference type="Rhea" id="RHEA-COMP:10468"/>
        <dbReference type="Rhea" id="RHEA-COMP:18655"/>
        <dbReference type="ChEBI" id="CHEBI:30616"/>
        <dbReference type="ChEBI" id="CHEBI:33019"/>
        <dbReference type="ChEBI" id="CHEBI:37563"/>
        <dbReference type="ChEBI" id="CHEBI:83071"/>
        <dbReference type="ChEBI" id="CHEBI:195187"/>
    </reaction>
    <physiologicalReaction direction="left-to-right" evidence="1">
        <dbReference type="Rhea" id="RHEA:76236"/>
    </physiologicalReaction>
</comment>
<comment type="cofactor">
    <cofactor evidence="1">
        <name>Mg(2+)</name>
        <dbReference type="ChEBI" id="CHEBI:18420"/>
    </cofactor>
</comment>
<comment type="subunit">
    <text evidence="1">Homodimer.</text>
</comment>
<comment type="miscellaneous">
    <text evidence="1">A single active site specifically recognizes both ATP and CTP and is responsible for their addition.</text>
</comment>
<comment type="similarity">
    <text evidence="1">Belongs to the tRNA nucleotidyltransferase/poly(A) polymerase family. Archaeal CCA-adding enzyme subfamily.</text>
</comment>
<gene>
    <name evidence="1" type="primary">cca</name>
    <name type="ordered locus">MmarC5_0756</name>
</gene>
<accession>A4FXY2</accession>
<dbReference type="EC" id="2.7.7.72" evidence="1"/>
<dbReference type="EMBL" id="CP000609">
    <property type="protein sequence ID" value="ABO35066.1"/>
    <property type="molecule type" value="Genomic_DNA"/>
</dbReference>
<dbReference type="RefSeq" id="WP_011868520.1">
    <property type="nucleotide sequence ID" value="NC_009135.1"/>
</dbReference>
<dbReference type="SMR" id="A4FXY2"/>
<dbReference type="STRING" id="402880.MmarC5_0756"/>
<dbReference type="GeneID" id="4928081"/>
<dbReference type="KEGG" id="mmq:MmarC5_0756"/>
<dbReference type="eggNOG" id="arCOG04249">
    <property type="taxonomic scope" value="Archaea"/>
</dbReference>
<dbReference type="HOGENOM" id="CLU_044679_1_0_2"/>
<dbReference type="OrthoDB" id="7378at2157"/>
<dbReference type="Proteomes" id="UP000000253">
    <property type="component" value="Chromosome"/>
</dbReference>
<dbReference type="GO" id="GO:0005524">
    <property type="term" value="F:ATP binding"/>
    <property type="evidence" value="ECO:0007669"/>
    <property type="project" value="UniProtKB-UniRule"/>
</dbReference>
<dbReference type="GO" id="GO:0004810">
    <property type="term" value="F:CCA tRNA nucleotidyltransferase activity"/>
    <property type="evidence" value="ECO:0007669"/>
    <property type="project" value="UniProtKB-UniRule"/>
</dbReference>
<dbReference type="GO" id="GO:0000287">
    <property type="term" value="F:magnesium ion binding"/>
    <property type="evidence" value="ECO:0007669"/>
    <property type="project" value="UniProtKB-UniRule"/>
</dbReference>
<dbReference type="GO" id="GO:0000049">
    <property type="term" value="F:tRNA binding"/>
    <property type="evidence" value="ECO:0007669"/>
    <property type="project" value="UniProtKB-UniRule"/>
</dbReference>
<dbReference type="GO" id="GO:0042245">
    <property type="term" value="P:RNA repair"/>
    <property type="evidence" value="ECO:0007669"/>
    <property type="project" value="UniProtKB-KW"/>
</dbReference>
<dbReference type="GO" id="GO:0001680">
    <property type="term" value="P:tRNA 3'-terminal CCA addition"/>
    <property type="evidence" value="ECO:0007669"/>
    <property type="project" value="UniProtKB-UniRule"/>
</dbReference>
<dbReference type="CDD" id="cd05400">
    <property type="entry name" value="NT_2-5OAS_ClassI-CCAase"/>
    <property type="match status" value="1"/>
</dbReference>
<dbReference type="Gene3D" id="3.30.460.10">
    <property type="entry name" value="Beta Polymerase, domain 2"/>
    <property type="match status" value="1"/>
</dbReference>
<dbReference type="Gene3D" id="1.10.1410.30">
    <property type="entry name" value="CCA tRNA nucleotidyltransferase, domain 2"/>
    <property type="match status" value="1"/>
</dbReference>
<dbReference type="Gene3D" id="3.30.70.590">
    <property type="entry name" value="Poly(A) polymerase predicted RNA binding domain"/>
    <property type="match status" value="1"/>
</dbReference>
<dbReference type="HAMAP" id="MF_01264">
    <property type="entry name" value="CCA_arch"/>
    <property type="match status" value="1"/>
</dbReference>
<dbReference type="InterPro" id="IPR048833">
    <property type="entry name" value="CAA_C"/>
</dbReference>
<dbReference type="InterPro" id="IPR008229">
    <property type="entry name" value="CCA-adding_arc"/>
</dbReference>
<dbReference type="InterPro" id="IPR042090">
    <property type="entry name" value="CCA_tRNA_nucleotrans_2"/>
</dbReference>
<dbReference type="InterPro" id="IPR006116">
    <property type="entry name" value="NT_2-5OAS_ClassI-CCAase"/>
</dbReference>
<dbReference type="InterPro" id="IPR043519">
    <property type="entry name" value="NT_sf"/>
</dbReference>
<dbReference type="InterPro" id="IPR011068">
    <property type="entry name" value="NuclTrfase_I-like_C"/>
</dbReference>
<dbReference type="InterPro" id="IPR002934">
    <property type="entry name" value="Polymerase_NTP_transf_dom"/>
</dbReference>
<dbReference type="InterPro" id="IPR015329">
    <property type="entry name" value="tRNA_NucTransf2"/>
</dbReference>
<dbReference type="NCBIfam" id="TIGR03671">
    <property type="entry name" value="cca_archaeal"/>
    <property type="match status" value="1"/>
</dbReference>
<dbReference type="PANTHER" id="PTHR39643">
    <property type="entry name" value="CCA-ADDING ENZYME"/>
    <property type="match status" value="1"/>
</dbReference>
<dbReference type="PANTHER" id="PTHR39643:SF1">
    <property type="entry name" value="CCA-ADDING ENZYME"/>
    <property type="match status" value="1"/>
</dbReference>
<dbReference type="Pfam" id="PF21133">
    <property type="entry name" value="CAA_C"/>
    <property type="match status" value="1"/>
</dbReference>
<dbReference type="Pfam" id="PF01909">
    <property type="entry name" value="NTP_transf_2"/>
    <property type="match status" value="1"/>
</dbReference>
<dbReference type="Pfam" id="PF09249">
    <property type="entry name" value="tRNA_NucTransf2"/>
    <property type="match status" value="1"/>
</dbReference>
<dbReference type="PIRSF" id="PIRSF005335">
    <property type="entry name" value="CCA_arch"/>
    <property type="match status" value="1"/>
</dbReference>
<dbReference type="SUPFAM" id="SSF81301">
    <property type="entry name" value="Nucleotidyltransferase"/>
    <property type="match status" value="1"/>
</dbReference>
<dbReference type="SUPFAM" id="SSF55003">
    <property type="entry name" value="PAP/Archaeal CCA-adding enzyme, C-terminal domain"/>
    <property type="match status" value="1"/>
</dbReference>
<dbReference type="SUPFAM" id="SSF81631">
    <property type="entry name" value="PAP/OAS1 substrate-binding domain"/>
    <property type="match status" value="1"/>
</dbReference>
<keyword id="KW-0067">ATP-binding</keyword>
<keyword id="KW-0460">Magnesium</keyword>
<keyword id="KW-0479">Metal-binding</keyword>
<keyword id="KW-0547">Nucleotide-binding</keyword>
<keyword id="KW-0548">Nucleotidyltransferase</keyword>
<keyword id="KW-0692">RNA repair</keyword>
<keyword id="KW-0694">RNA-binding</keyword>
<keyword id="KW-0808">Transferase</keyword>
<keyword id="KW-0819">tRNA processing</keyword>
<evidence type="ECO:0000255" key="1">
    <source>
        <dbReference type="HAMAP-Rule" id="MF_01264"/>
    </source>
</evidence>
<protein>
    <recommendedName>
        <fullName evidence="1">CCA-adding enzyme</fullName>
        <ecNumber evidence="1">2.7.7.72</ecNumber>
    </recommendedName>
    <alternativeName>
        <fullName evidence="1">CCA tRNA nucleotidyltransferase</fullName>
    </alternativeName>
    <alternativeName>
        <fullName evidence="1">tRNA CCA-pyrophosphorylase</fullName>
    </alternativeName>
    <alternativeName>
        <fullName evidence="1">tRNA adenylyl-/cytidylyl- transferase</fullName>
    </alternativeName>
    <alternativeName>
        <fullName evidence="1">tRNA nucleotidyltransferase</fullName>
    </alternativeName>
    <alternativeName>
        <fullName evidence="1">tRNA-NT</fullName>
    </alternativeName>
</protein>
<proteinExistence type="inferred from homology"/>
<name>CCA_METM5</name>
<sequence length="444" mass="52082">MKKLNINDYNDILNEVLNDIRPTELEKDKLKVFSDKIIAKIKDISKYPVLDIIQVGSTARDANLKDDHDLDIFLRFEKETDRDTLKESGLRIGKEVIDYFNGKSWVEYAEHPYVSGEIEKFNLDIVPCYGIENCEKIISAVDRTPLHNEFLIMSYKNKNLSDDIRLLKKFLKGLGIYGSDLKTAGFSGYLCELLILKYGGFLSLLSDVKNWRPNKSIVLNEIYEMYDLKKEHEFLNFDDSLVVYDPVDLNRNVAAALNEENLCKFIFYSKMFLENPSKEFFYGFDKKITDFLNIRERGYLLTLEISRPENIVEDVIYPQMEKIQKSINKLIKEHDFEYIRYQNFADENTCYLSWEFLIHELPDVKIRTGPPVYSEPGVVNFITHNEHYFVKGCNVCAYKTRKYKNIQILFEDIVNGKLRKIITYPKYVCPENAEIRLGTFVERT</sequence>